<comment type="function">
    <text evidence="1">Specifically methylates the cytosine at position 1407 (m5C1407) of 16S rRNA.</text>
</comment>
<comment type="catalytic activity">
    <reaction evidence="1">
        <text>cytidine(1407) in 16S rRNA + S-adenosyl-L-methionine = 5-methylcytidine(1407) in 16S rRNA + S-adenosyl-L-homocysteine + H(+)</text>
        <dbReference type="Rhea" id="RHEA:42756"/>
        <dbReference type="Rhea" id="RHEA-COMP:10223"/>
        <dbReference type="Rhea" id="RHEA-COMP:10224"/>
        <dbReference type="ChEBI" id="CHEBI:15378"/>
        <dbReference type="ChEBI" id="CHEBI:57856"/>
        <dbReference type="ChEBI" id="CHEBI:59789"/>
        <dbReference type="ChEBI" id="CHEBI:74483"/>
        <dbReference type="ChEBI" id="CHEBI:82748"/>
        <dbReference type="EC" id="2.1.1.178"/>
    </reaction>
</comment>
<comment type="subcellular location">
    <subcellularLocation>
        <location evidence="1">Cytoplasm</location>
    </subcellularLocation>
</comment>
<comment type="similarity">
    <text evidence="1">Belongs to the class I-like SAM-binding methyltransferase superfamily. RsmB/NOP family.</text>
</comment>
<comment type="sequence caution" evidence="2">
    <conflict type="erroneous initiation">
        <sequence resource="EMBL-CDS" id="ABV19422"/>
    </conflict>
</comment>
<protein>
    <recommendedName>
        <fullName evidence="1">Ribosomal RNA small subunit methyltransferase F</fullName>
        <ecNumber evidence="1">2.1.1.178</ecNumber>
    </recommendedName>
    <alternativeName>
        <fullName evidence="1">16S rRNA m5C1407 methyltransferase</fullName>
    </alternativeName>
    <alternativeName>
        <fullName evidence="1">rRNA (cytosine-C(5)-)-methyltransferase RsmF</fullName>
    </alternativeName>
</protein>
<feature type="chain" id="PRO_0000382570" description="Ribosomal RNA small subunit methyltransferase F">
    <location>
        <begin position="1"/>
        <end position="479"/>
    </location>
</feature>
<feature type="active site" description="Nucleophile" evidence="1">
    <location>
        <position position="247"/>
    </location>
</feature>
<feature type="binding site" evidence="1">
    <location>
        <begin position="125"/>
        <end position="131"/>
    </location>
    <ligand>
        <name>S-adenosyl-L-methionine</name>
        <dbReference type="ChEBI" id="CHEBI:59789"/>
    </ligand>
</feature>
<feature type="binding site" evidence="1">
    <location>
        <position position="149"/>
    </location>
    <ligand>
        <name>S-adenosyl-L-methionine</name>
        <dbReference type="ChEBI" id="CHEBI:59789"/>
    </ligand>
</feature>
<feature type="binding site" evidence="1">
    <location>
        <position position="176"/>
    </location>
    <ligand>
        <name>S-adenosyl-L-methionine</name>
        <dbReference type="ChEBI" id="CHEBI:59789"/>
    </ligand>
</feature>
<feature type="binding site" evidence="1">
    <location>
        <position position="194"/>
    </location>
    <ligand>
        <name>S-adenosyl-L-methionine</name>
        <dbReference type="ChEBI" id="CHEBI:59789"/>
    </ligand>
</feature>
<dbReference type="EC" id="2.1.1.178" evidence="1"/>
<dbReference type="EMBL" id="CP000800">
    <property type="protein sequence ID" value="ABV19422.1"/>
    <property type="status" value="ALT_INIT"/>
    <property type="molecule type" value="Genomic_DNA"/>
</dbReference>
<dbReference type="RefSeq" id="WP_000057022.1">
    <property type="nucleotide sequence ID" value="NC_009801.1"/>
</dbReference>
<dbReference type="SMR" id="A7ZMV8"/>
<dbReference type="GeneID" id="75202662"/>
<dbReference type="KEGG" id="ecw:EcE24377A_2064"/>
<dbReference type="HOGENOM" id="CLU_005316_6_2_6"/>
<dbReference type="Proteomes" id="UP000001122">
    <property type="component" value="Chromosome"/>
</dbReference>
<dbReference type="GO" id="GO:0005737">
    <property type="term" value="C:cytoplasm"/>
    <property type="evidence" value="ECO:0007669"/>
    <property type="project" value="UniProtKB-SubCell"/>
</dbReference>
<dbReference type="GO" id="GO:0003723">
    <property type="term" value="F:RNA binding"/>
    <property type="evidence" value="ECO:0007669"/>
    <property type="project" value="UniProtKB-KW"/>
</dbReference>
<dbReference type="GO" id="GO:0009383">
    <property type="term" value="F:rRNA (cytosine-C5-)-methyltransferase activity"/>
    <property type="evidence" value="ECO:0007669"/>
    <property type="project" value="TreeGrafter"/>
</dbReference>
<dbReference type="GO" id="GO:0070475">
    <property type="term" value="P:rRNA base methylation"/>
    <property type="evidence" value="ECO:0007669"/>
    <property type="project" value="TreeGrafter"/>
</dbReference>
<dbReference type="CDD" id="cd02440">
    <property type="entry name" value="AdoMet_MTases"/>
    <property type="match status" value="1"/>
</dbReference>
<dbReference type="FunFam" id="3.10.450.720:FF:000001">
    <property type="entry name" value="Ribosomal RNA small subunit methyltransferase F"/>
    <property type="match status" value="1"/>
</dbReference>
<dbReference type="FunFam" id="3.40.50.150:FF:000079">
    <property type="entry name" value="Ribosomal RNA small subunit methyltransferase F"/>
    <property type="match status" value="1"/>
</dbReference>
<dbReference type="Gene3D" id="3.10.450.720">
    <property type="match status" value="1"/>
</dbReference>
<dbReference type="Gene3D" id="3.40.50.150">
    <property type="entry name" value="Vaccinia Virus protein VP39"/>
    <property type="match status" value="1"/>
</dbReference>
<dbReference type="HAMAP" id="MF_01579">
    <property type="entry name" value="16SrRNA_methyltr_F"/>
    <property type="match status" value="1"/>
</dbReference>
<dbReference type="InterPro" id="IPR031341">
    <property type="entry name" value="Methyltr_RsmF_N"/>
</dbReference>
<dbReference type="InterPro" id="IPR049560">
    <property type="entry name" value="MeTrfase_RsmB-F_NOP2_cat"/>
</dbReference>
<dbReference type="InterPro" id="IPR001678">
    <property type="entry name" value="MeTrfase_RsmB-F_NOP2_dom"/>
</dbReference>
<dbReference type="InterPro" id="IPR027391">
    <property type="entry name" value="Nol1_Nop2_Fmu_2"/>
</dbReference>
<dbReference type="InterPro" id="IPR011023">
    <property type="entry name" value="Nop2p"/>
</dbReference>
<dbReference type="InterPro" id="IPR023267">
    <property type="entry name" value="RCMT"/>
</dbReference>
<dbReference type="InterPro" id="IPR023545">
    <property type="entry name" value="rRNA_ssu_MeTfrase_F"/>
</dbReference>
<dbReference type="InterPro" id="IPR018314">
    <property type="entry name" value="RsmB/NOL1/NOP2-like_CS"/>
</dbReference>
<dbReference type="InterPro" id="IPR029063">
    <property type="entry name" value="SAM-dependent_MTases_sf"/>
</dbReference>
<dbReference type="InterPro" id="IPR048457">
    <property type="entry name" value="YebU_pre-PUA_dom"/>
</dbReference>
<dbReference type="NCBIfam" id="TIGR00446">
    <property type="entry name" value="nop2p"/>
    <property type="match status" value="1"/>
</dbReference>
<dbReference type="NCBIfam" id="NF008898">
    <property type="entry name" value="PRK11933.1"/>
    <property type="match status" value="1"/>
</dbReference>
<dbReference type="PANTHER" id="PTHR22807:SF30">
    <property type="entry name" value="28S RRNA (CYTOSINE(4447)-C(5))-METHYLTRANSFERASE-RELATED"/>
    <property type="match status" value="1"/>
</dbReference>
<dbReference type="PANTHER" id="PTHR22807">
    <property type="entry name" value="NOP2 YEAST -RELATED NOL1/NOP2/FMU SUN DOMAIN-CONTAINING"/>
    <property type="match status" value="1"/>
</dbReference>
<dbReference type="Pfam" id="PF01189">
    <property type="entry name" value="Methyltr_RsmB-F"/>
    <property type="match status" value="1"/>
</dbReference>
<dbReference type="Pfam" id="PF17125">
    <property type="entry name" value="Methyltr_RsmF_N"/>
    <property type="match status" value="1"/>
</dbReference>
<dbReference type="Pfam" id="PF13636">
    <property type="entry name" value="Methyltranf_PUA"/>
    <property type="match status" value="1"/>
</dbReference>
<dbReference type="Pfam" id="PF21150">
    <property type="entry name" value="YebU_pre-PUA_dom"/>
    <property type="match status" value="1"/>
</dbReference>
<dbReference type="PRINTS" id="PR02008">
    <property type="entry name" value="RCMTFAMILY"/>
</dbReference>
<dbReference type="SUPFAM" id="SSF53335">
    <property type="entry name" value="S-adenosyl-L-methionine-dependent methyltransferases"/>
    <property type="match status" value="1"/>
</dbReference>
<dbReference type="PROSITE" id="PS01153">
    <property type="entry name" value="NOL1_NOP2_SUN"/>
    <property type="match status" value="1"/>
</dbReference>
<dbReference type="PROSITE" id="PS51686">
    <property type="entry name" value="SAM_MT_RSMB_NOP"/>
    <property type="match status" value="1"/>
</dbReference>
<organism>
    <name type="scientific">Escherichia coli O139:H28 (strain E24377A / ETEC)</name>
    <dbReference type="NCBI Taxonomy" id="331111"/>
    <lineage>
        <taxon>Bacteria</taxon>
        <taxon>Pseudomonadati</taxon>
        <taxon>Pseudomonadota</taxon>
        <taxon>Gammaproteobacteria</taxon>
        <taxon>Enterobacterales</taxon>
        <taxon>Enterobacteriaceae</taxon>
        <taxon>Escherichia</taxon>
    </lineage>
</organism>
<evidence type="ECO:0000255" key="1">
    <source>
        <dbReference type="HAMAP-Rule" id="MF_01579"/>
    </source>
</evidence>
<evidence type="ECO:0000305" key="2"/>
<gene>
    <name evidence="1" type="primary">rsmF</name>
    <name type="ordered locus">EcE24377A_2064</name>
</gene>
<name>RSMF_ECO24</name>
<accession>A7ZMV8</accession>
<proteinExistence type="inferred from homology"/>
<reference key="1">
    <citation type="journal article" date="2008" name="J. Bacteriol.">
        <title>The pangenome structure of Escherichia coli: comparative genomic analysis of E. coli commensal and pathogenic isolates.</title>
        <authorList>
            <person name="Rasko D.A."/>
            <person name="Rosovitz M.J."/>
            <person name="Myers G.S.A."/>
            <person name="Mongodin E.F."/>
            <person name="Fricke W.F."/>
            <person name="Gajer P."/>
            <person name="Crabtree J."/>
            <person name="Sebaihia M."/>
            <person name="Thomson N.R."/>
            <person name="Chaudhuri R."/>
            <person name="Henderson I.R."/>
            <person name="Sperandio V."/>
            <person name="Ravel J."/>
        </authorList>
    </citation>
    <scope>NUCLEOTIDE SEQUENCE [LARGE SCALE GENOMIC DNA]</scope>
    <source>
        <strain>E24377A / ETEC</strain>
    </source>
</reference>
<keyword id="KW-0963">Cytoplasm</keyword>
<keyword id="KW-0489">Methyltransferase</keyword>
<keyword id="KW-1185">Reference proteome</keyword>
<keyword id="KW-0694">RNA-binding</keyword>
<keyword id="KW-0698">rRNA processing</keyword>
<keyword id="KW-0949">S-adenosyl-L-methionine</keyword>
<keyword id="KW-0808">Transferase</keyword>
<sequence>MAQHTVYFPDAFLTQMREAMPSTLSFDDFLAACQRPLRRSIRVNTLKISVADFLQLTAPYGWTLTPIPWCEEGFWIERDNEDALPLGSTAEHLSGLFYIQEASSMLPVAALFADDNAPQRVMDVAAAPGSKTTQIAARMNNEGAILANEFSASRVKVLHANISRCGISNVALTHFDGRVFGAAVPEMFDAILLDAPCSGEGVVRKDPDALKNWSPESNQEIAATQRELIDSAFHALRPGGTLVYSTCTLNQEENEAVCLWLKETYPDAVEFLPLGDLFPGANKALTEEGFLHVFPQIYDCEGFFVARLRKTQAIPALPAPKYKVGNFPFSPVKDREAGQIRQAAASVGLNWDGNLRLWQRDKELWLFPVGIEALIGKVRFSRLGIKLAETHNKGYRWQHEAVIALATPDNVNAFELTPQEAEEWYRGRDVYPQAAPVADDVLVTFQHQPIGLAKRIGSRLKNSYPRELVRDGKLFTGNA</sequence>